<gene>
    <name type="ORF">SPAC9E9.04</name>
</gene>
<feature type="chain" id="PRO_0000116732" description="Uncharacterized protein C9E9.04">
    <location>
        <begin position="1"/>
        <end position="188"/>
    </location>
</feature>
<feature type="transmembrane region" description="Helical" evidence="1">
    <location>
        <begin position="6"/>
        <end position="26"/>
    </location>
</feature>
<feature type="transmembrane region" description="Helical" evidence="1">
    <location>
        <begin position="43"/>
        <end position="63"/>
    </location>
</feature>
<feature type="transmembrane region" description="Helical" evidence="1">
    <location>
        <begin position="110"/>
        <end position="130"/>
    </location>
</feature>
<proteinExistence type="predicted"/>
<reference key="1">
    <citation type="journal article" date="2002" name="Nature">
        <title>The genome sequence of Schizosaccharomyces pombe.</title>
        <authorList>
            <person name="Wood V."/>
            <person name="Gwilliam R."/>
            <person name="Rajandream M.A."/>
            <person name="Lyne M.H."/>
            <person name="Lyne R."/>
            <person name="Stewart A."/>
            <person name="Sgouros J.G."/>
            <person name="Peat N."/>
            <person name="Hayles J."/>
            <person name="Baker S.G."/>
            <person name="Basham D."/>
            <person name="Bowman S."/>
            <person name="Brooks K."/>
            <person name="Brown D."/>
            <person name="Brown S."/>
            <person name="Chillingworth T."/>
            <person name="Churcher C.M."/>
            <person name="Collins M."/>
            <person name="Connor R."/>
            <person name="Cronin A."/>
            <person name="Davis P."/>
            <person name="Feltwell T."/>
            <person name="Fraser A."/>
            <person name="Gentles S."/>
            <person name="Goble A."/>
            <person name="Hamlin N."/>
            <person name="Harris D.E."/>
            <person name="Hidalgo J."/>
            <person name="Hodgson G."/>
            <person name="Holroyd S."/>
            <person name="Hornsby T."/>
            <person name="Howarth S."/>
            <person name="Huckle E.J."/>
            <person name="Hunt S."/>
            <person name="Jagels K."/>
            <person name="James K.D."/>
            <person name="Jones L."/>
            <person name="Jones M."/>
            <person name="Leather S."/>
            <person name="McDonald S."/>
            <person name="McLean J."/>
            <person name="Mooney P."/>
            <person name="Moule S."/>
            <person name="Mungall K.L."/>
            <person name="Murphy L.D."/>
            <person name="Niblett D."/>
            <person name="Odell C."/>
            <person name="Oliver K."/>
            <person name="O'Neil S."/>
            <person name="Pearson D."/>
            <person name="Quail M.A."/>
            <person name="Rabbinowitsch E."/>
            <person name="Rutherford K.M."/>
            <person name="Rutter S."/>
            <person name="Saunders D."/>
            <person name="Seeger K."/>
            <person name="Sharp S."/>
            <person name="Skelton J."/>
            <person name="Simmonds M.N."/>
            <person name="Squares R."/>
            <person name="Squares S."/>
            <person name="Stevens K."/>
            <person name="Taylor K."/>
            <person name="Taylor R.G."/>
            <person name="Tivey A."/>
            <person name="Walsh S.V."/>
            <person name="Warren T."/>
            <person name="Whitehead S."/>
            <person name="Woodward J.R."/>
            <person name="Volckaert G."/>
            <person name="Aert R."/>
            <person name="Robben J."/>
            <person name="Grymonprez B."/>
            <person name="Weltjens I."/>
            <person name="Vanstreels E."/>
            <person name="Rieger M."/>
            <person name="Schaefer M."/>
            <person name="Mueller-Auer S."/>
            <person name="Gabel C."/>
            <person name="Fuchs M."/>
            <person name="Duesterhoeft A."/>
            <person name="Fritzc C."/>
            <person name="Holzer E."/>
            <person name="Moestl D."/>
            <person name="Hilbert H."/>
            <person name="Borzym K."/>
            <person name="Langer I."/>
            <person name="Beck A."/>
            <person name="Lehrach H."/>
            <person name="Reinhardt R."/>
            <person name="Pohl T.M."/>
            <person name="Eger P."/>
            <person name="Zimmermann W."/>
            <person name="Wedler H."/>
            <person name="Wambutt R."/>
            <person name="Purnelle B."/>
            <person name="Goffeau A."/>
            <person name="Cadieu E."/>
            <person name="Dreano S."/>
            <person name="Gloux S."/>
            <person name="Lelaure V."/>
            <person name="Mottier S."/>
            <person name="Galibert F."/>
            <person name="Aves S.J."/>
            <person name="Xiang Z."/>
            <person name="Hunt C."/>
            <person name="Moore K."/>
            <person name="Hurst S.M."/>
            <person name="Lucas M."/>
            <person name="Rochet M."/>
            <person name="Gaillardin C."/>
            <person name="Tallada V.A."/>
            <person name="Garzon A."/>
            <person name="Thode G."/>
            <person name="Daga R.R."/>
            <person name="Cruzado L."/>
            <person name="Jimenez J."/>
            <person name="Sanchez M."/>
            <person name="del Rey F."/>
            <person name="Benito J."/>
            <person name="Dominguez A."/>
            <person name="Revuelta J.L."/>
            <person name="Moreno S."/>
            <person name="Armstrong J."/>
            <person name="Forsburg S.L."/>
            <person name="Cerutti L."/>
            <person name="Lowe T."/>
            <person name="McCombie W.R."/>
            <person name="Paulsen I."/>
            <person name="Potashkin J."/>
            <person name="Shpakovski G.V."/>
            <person name="Ussery D."/>
            <person name="Barrell B.G."/>
            <person name="Nurse P."/>
        </authorList>
    </citation>
    <scope>NUCLEOTIDE SEQUENCE [LARGE SCALE GENOMIC DNA]</scope>
    <source>
        <strain>972 / ATCC 24843</strain>
    </source>
</reference>
<reference key="2">
    <citation type="journal article" date="2000" name="Genes Cells">
        <title>Large-scale screening of intracellular protein localization in living fission yeast cells by the use of a GFP-fusion genomic DNA library.</title>
        <authorList>
            <person name="Ding D.-Q."/>
            <person name="Tomita Y."/>
            <person name="Yamamoto A."/>
            <person name="Chikashige Y."/>
            <person name="Haraguchi T."/>
            <person name="Hiraoka Y."/>
        </authorList>
    </citation>
    <scope>NUCLEOTIDE SEQUENCE [LARGE SCALE GENOMIC DNA] OF 53-109</scope>
    <scope>SUBCELLULAR LOCATION</scope>
    <source>
        <strain>ATCC 38364 / 968</strain>
    </source>
</reference>
<comment type="subcellular location">
    <subcellularLocation>
        <location evidence="2">Membrane</location>
        <topology evidence="2">Multi-pass membrane protein</topology>
    </subcellularLocation>
</comment>
<keyword id="KW-0472">Membrane</keyword>
<keyword id="KW-1185">Reference proteome</keyword>
<keyword id="KW-0812">Transmembrane</keyword>
<keyword id="KW-1133">Transmembrane helix</keyword>
<accession>O14290</accession>
<accession>Q9UU45</accession>
<name>YF14_SCHPO</name>
<evidence type="ECO:0000255" key="1"/>
<evidence type="ECO:0000269" key="2">
    <source>
    </source>
</evidence>
<protein>
    <recommendedName>
        <fullName>Uncharacterized protein C9E9.04</fullName>
    </recommendedName>
</protein>
<organism>
    <name type="scientific">Schizosaccharomyces pombe (strain 972 / ATCC 24843)</name>
    <name type="common">Fission yeast</name>
    <dbReference type="NCBI Taxonomy" id="284812"/>
    <lineage>
        <taxon>Eukaryota</taxon>
        <taxon>Fungi</taxon>
        <taxon>Dikarya</taxon>
        <taxon>Ascomycota</taxon>
        <taxon>Taphrinomycotina</taxon>
        <taxon>Schizosaccharomycetes</taxon>
        <taxon>Schizosaccharomycetales</taxon>
        <taxon>Schizosaccharomycetaceae</taxon>
        <taxon>Schizosaccharomyces</taxon>
    </lineage>
</organism>
<dbReference type="EMBL" id="CU329670">
    <property type="protein sequence ID" value="CAB16403.1"/>
    <property type="molecule type" value="Genomic_DNA"/>
</dbReference>
<dbReference type="EMBL" id="AB027820">
    <property type="protein sequence ID" value="BAA87124.1"/>
    <property type="molecule type" value="Genomic_DNA"/>
</dbReference>
<dbReference type="PIR" id="T39211">
    <property type="entry name" value="T39211"/>
</dbReference>
<dbReference type="RefSeq" id="NP_594577.1">
    <property type="nucleotide sequence ID" value="NM_001020006.2"/>
</dbReference>
<dbReference type="SMR" id="O14290"/>
<dbReference type="BioGRID" id="279716">
    <property type="interactions" value="22"/>
</dbReference>
<dbReference type="FunCoup" id="O14290">
    <property type="interactions" value="221"/>
</dbReference>
<dbReference type="STRING" id="284812.O14290"/>
<dbReference type="iPTMnet" id="O14290"/>
<dbReference type="PaxDb" id="4896-SPAC9E9.04.1"/>
<dbReference type="EnsemblFungi" id="SPAC9E9.04.1">
    <property type="protein sequence ID" value="SPAC9E9.04.1:pep"/>
    <property type="gene ID" value="SPAC9E9.04"/>
</dbReference>
<dbReference type="KEGG" id="spo:2543291"/>
<dbReference type="PomBase" id="SPAC9E9.04"/>
<dbReference type="VEuPathDB" id="FungiDB:SPAC9E9.04"/>
<dbReference type="eggNOG" id="KOG1962">
    <property type="taxonomic scope" value="Eukaryota"/>
</dbReference>
<dbReference type="HOGENOM" id="CLU_087648_0_1_1"/>
<dbReference type="InParanoid" id="O14290"/>
<dbReference type="OMA" id="EMGLFML"/>
<dbReference type="PhylomeDB" id="O14290"/>
<dbReference type="Reactome" id="R-SPO-75153">
    <property type="pathway name" value="Apoptotic execution phase"/>
</dbReference>
<dbReference type="PRO" id="PR:O14290"/>
<dbReference type="Proteomes" id="UP000002485">
    <property type="component" value="Chromosome I"/>
</dbReference>
<dbReference type="GO" id="GO:0005737">
    <property type="term" value="C:cytoplasm"/>
    <property type="evidence" value="ECO:0007005"/>
    <property type="project" value="PomBase"/>
</dbReference>
<dbReference type="GO" id="GO:0005789">
    <property type="term" value="C:endoplasmic reticulum membrane"/>
    <property type="evidence" value="ECO:0000318"/>
    <property type="project" value="GO_Central"/>
</dbReference>
<dbReference type="GO" id="GO:0006888">
    <property type="term" value="P:endoplasmic reticulum to Golgi vesicle-mediated transport"/>
    <property type="evidence" value="ECO:0000318"/>
    <property type="project" value="GO_Central"/>
</dbReference>
<dbReference type="GO" id="GO:0006886">
    <property type="term" value="P:intracellular protein transport"/>
    <property type="evidence" value="ECO:0007669"/>
    <property type="project" value="InterPro"/>
</dbReference>
<dbReference type="GO" id="GO:0070973">
    <property type="term" value="P:protein localization to endoplasmic reticulum exit site"/>
    <property type="evidence" value="ECO:0000318"/>
    <property type="project" value="GO_Central"/>
</dbReference>
<dbReference type="InterPro" id="IPR008417">
    <property type="entry name" value="BAP29/BAP31"/>
</dbReference>
<dbReference type="InterPro" id="IPR040463">
    <property type="entry name" value="BAP29/BAP31_N"/>
</dbReference>
<dbReference type="PANTHER" id="PTHR12701">
    <property type="entry name" value="BCR-ASSOCIATED PROTEIN, BAP"/>
    <property type="match status" value="1"/>
</dbReference>
<dbReference type="PANTHER" id="PTHR12701:SF20">
    <property type="entry name" value="ENDOPLASMIC RETICULUM TRANSMEMBRANE PROTEIN"/>
    <property type="match status" value="1"/>
</dbReference>
<dbReference type="Pfam" id="PF05529">
    <property type="entry name" value="Bap31"/>
    <property type="match status" value="1"/>
</dbReference>
<sequence>MTIYYMIVFMLLMVEIVSFVILSLPLPLKVRRAILNAISNSPFAGRVKHVLKITIICILILFADSVRRVVRVTKEYDLAIAAPSTTESARSGYKASQFYAQRNLYLCGSALFLSLVVNRYYLALEAMIAAQDKMQALQTQVEASTNNAKAVEELETLRTKLETRDKEYETLAEKYAAVTKTVEKKKDI</sequence>